<name>H1_TETTS</name>
<accession>P10156</accession>
<proteinExistence type="evidence at protein level"/>
<feature type="initiator methionine" description="Removed" evidence="3">
    <location>
        <position position="1"/>
    </location>
</feature>
<feature type="chain" id="PRO_0000195990" description="Histone H1">
    <location>
        <begin position="2"/>
        <end position="164"/>
    </location>
</feature>
<feature type="region of interest" description="Disordered" evidence="1">
    <location>
        <begin position="1"/>
        <end position="164"/>
    </location>
</feature>
<feature type="compositionally biased region" description="Polar residues" evidence="1">
    <location>
        <begin position="1"/>
        <end position="10"/>
    </location>
</feature>
<feature type="compositionally biased region" description="Basic residues" evidence="1">
    <location>
        <begin position="16"/>
        <end position="27"/>
    </location>
</feature>
<feature type="compositionally biased region" description="Basic and acidic residues" evidence="1">
    <location>
        <begin position="49"/>
        <end position="61"/>
    </location>
</feature>
<feature type="compositionally biased region" description="Basic and acidic residues" evidence="1">
    <location>
        <begin position="69"/>
        <end position="89"/>
    </location>
</feature>
<feature type="compositionally biased region" description="Basic and acidic residues" evidence="1">
    <location>
        <begin position="117"/>
        <end position="156"/>
    </location>
</feature>
<feature type="modified residue" description="Phosphothreonine" evidence="2">
    <location>
        <position position="47"/>
    </location>
</feature>
<feature type="modified residue" description="Phosphothreonine" evidence="2">
    <location>
        <position position="54"/>
    </location>
</feature>
<keyword id="KW-0158">Chromosome</keyword>
<keyword id="KW-0903">Direct protein sequencing</keyword>
<keyword id="KW-0238">DNA-binding</keyword>
<keyword id="KW-0539">Nucleus</keyword>
<keyword id="KW-0597">Phosphoprotein</keyword>
<keyword id="KW-1185">Reference proteome</keyword>
<dbReference type="EMBL" id="M14854">
    <property type="protein sequence ID" value="AAA30119.1"/>
    <property type="molecule type" value="Genomic_DNA"/>
</dbReference>
<dbReference type="EMBL" id="GG662466">
    <property type="protein sequence ID" value="EAR83811.2"/>
    <property type="status" value="ALT_SEQ"/>
    <property type="molecule type" value="Genomic_DNA"/>
</dbReference>
<dbReference type="PIR" id="A26490">
    <property type="entry name" value="A26490"/>
</dbReference>
<dbReference type="RefSeq" id="XP_001031474.2">
    <property type="nucleotide sequence ID" value="XM_001031474.3"/>
</dbReference>
<dbReference type="STRING" id="312017.P10156"/>
<dbReference type="iPTMnet" id="P10156"/>
<dbReference type="EnsemblProtists" id="EAR83811">
    <property type="protein sequence ID" value="EAR83811"/>
    <property type="gene ID" value="TTHERM_00823720"/>
</dbReference>
<dbReference type="GeneID" id="7842709"/>
<dbReference type="KEGG" id="tet:TTHERM_00823720"/>
<dbReference type="HOGENOM" id="CLU_1622325_0_0_1"/>
<dbReference type="InParanoid" id="P10156"/>
<dbReference type="Proteomes" id="UP000009168">
    <property type="component" value="Unassembled WGS sequence"/>
</dbReference>
<dbReference type="GO" id="GO:0005694">
    <property type="term" value="C:chromosome"/>
    <property type="evidence" value="ECO:0007669"/>
    <property type="project" value="UniProtKB-SubCell"/>
</dbReference>
<dbReference type="GO" id="GO:0005634">
    <property type="term" value="C:nucleus"/>
    <property type="evidence" value="ECO:0007669"/>
    <property type="project" value="UniProtKB-SubCell"/>
</dbReference>
<dbReference type="GO" id="GO:0003677">
    <property type="term" value="F:DNA binding"/>
    <property type="evidence" value="ECO:0007669"/>
    <property type="project" value="UniProtKB-KW"/>
</dbReference>
<gene>
    <name type="primary">HHO</name>
    <name type="ORF">TTHERM_00823720</name>
</gene>
<protein>
    <recommendedName>
        <fullName>Histone H1</fullName>
    </recommendedName>
</protein>
<sequence>MAPRSSTSKSATREKKDHKKAPIKKAIAKKDTKPTPTKGKAASASTTPVKKDVTPVKADTKKKIHKTKTMKETVSDAKKTVHAAAGDKKLSKKRPAKEAAKKAINPGKKAAAQPKSTKKEVKKDNKTAKKETKKDHKPAKKEAKKETKPAKKDAKKSSKPAKKN</sequence>
<organism>
    <name type="scientific">Tetrahymena thermophila (strain SB210)</name>
    <dbReference type="NCBI Taxonomy" id="312017"/>
    <lineage>
        <taxon>Eukaryota</taxon>
        <taxon>Sar</taxon>
        <taxon>Alveolata</taxon>
        <taxon>Ciliophora</taxon>
        <taxon>Intramacronucleata</taxon>
        <taxon>Oligohymenophorea</taxon>
        <taxon>Hymenostomatida</taxon>
        <taxon>Tetrahymenina</taxon>
        <taxon>Tetrahymenidae</taxon>
        <taxon>Tetrahymena</taxon>
    </lineage>
</organism>
<reference key="1">
    <citation type="journal article" date="1986" name="Proc. Natl. Acad. Sci. U.S.A.">
        <title>An intervening sequence in an unusual histone H1 gene of Tetrahymena thermophila.</title>
        <authorList>
            <person name="Wu M."/>
            <person name="Allis C.D."/>
            <person name="Richman R."/>
            <person name="Cook R.G."/>
            <person name="Gorovsky M.A."/>
        </authorList>
    </citation>
    <scope>NUCLEOTIDE SEQUENCE [GENOMIC DNA]</scope>
    <scope>PROTEIN SEQUENCE OF 2-29 AND 70-81</scope>
</reference>
<reference key="2">
    <citation type="journal article" date="2006" name="PLoS Biol.">
        <title>Macronuclear genome sequence of the ciliate Tetrahymena thermophila, a model eukaryote.</title>
        <authorList>
            <person name="Eisen J.A."/>
            <person name="Coyne R.S."/>
            <person name="Wu M."/>
            <person name="Wu D."/>
            <person name="Thiagarajan M."/>
            <person name="Wortman J.R."/>
            <person name="Badger J.H."/>
            <person name="Ren Q."/>
            <person name="Amedeo P."/>
            <person name="Jones K.M."/>
            <person name="Tallon L.J."/>
            <person name="Delcher A.L."/>
            <person name="Salzberg S.L."/>
            <person name="Silva J.C."/>
            <person name="Haas B.J."/>
            <person name="Majoros W.H."/>
            <person name="Farzad M."/>
            <person name="Carlton J.M."/>
            <person name="Smith R.K. Jr."/>
            <person name="Garg J."/>
            <person name="Pearlman R.E."/>
            <person name="Karrer K.M."/>
            <person name="Sun L."/>
            <person name="Manning G."/>
            <person name="Elde N.C."/>
            <person name="Turkewitz A.P."/>
            <person name="Asai D.J."/>
            <person name="Wilkes D.E."/>
            <person name="Wang Y."/>
            <person name="Cai H."/>
            <person name="Collins K."/>
            <person name="Stewart B.A."/>
            <person name="Lee S.R."/>
            <person name="Wilamowska K."/>
            <person name="Weinberg Z."/>
            <person name="Ruzzo W.L."/>
            <person name="Wloga D."/>
            <person name="Gaertig J."/>
            <person name="Frankel J."/>
            <person name="Tsao C.-C."/>
            <person name="Gorovsky M.A."/>
            <person name="Keeling P.J."/>
            <person name="Waller R.F."/>
            <person name="Patron N.J."/>
            <person name="Cherry J.M."/>
            <person name="Stover N.A."/>
            <person name="Krieger C.J."/>
            <person name="del Toro C."/>
            <person name="Ryder H.F."/>
            <person name="Williamson S.C."/>
            <person name="Barbeau R.A."/>
            <person name="Hamilton E.P."/>
            <person name="Orias E."/>
        </authorList>
    </citation>
    <scope>NUCLEOTIDE SEQUENCE [LARGE SCALE GENOMIC DNA]</scope>
    <source>
        <strain>SB210</strain>
    </source>
</reference>
<reference key="3">
    <citation type="journal article" date="1988" name="J. Cell Biol.">
        <title>Characterization of phosphorylation sites in histone H1 in the amitotic macronucleus of Tetrahymena during different physiological states.</title>
        <authorList>
            <person name="Roth S.Y."/>
            <person name="Schulman I.G."/>
            <person name="Richman R."/>
            <person name="Cook R.G."/>
            <person name="Allis C.D."/>
        </authorList>
    </citation>
    <scope>PHOSPHORYLATION AT THR-47 AND THR-54</scope>
    <source>
        <strain>CU427</strain>
        <strain>CU428</strain>
    </source>
</reference>
<evidence type="ECO:0000256" key="1">
    <source>
        <dbReference type="SAM" id="MobiDB-lite"/>
    </source>
</evidence>
<evidence type="ECO:0000269" key="2">
    <source>
    </source>
</evidence>
<evidence type="ECO:0000269" key="3">
    <source>
    </source>
</evidence>
<evidence type="ECO:0000305" key="4"/>
<comment type="function">
    <text>Histones H1 are necessary for the condensation of nucleosome chains into higher-order structures.</text>
</comment>
<comment type="subcellular location">
    <subcellularLocation>
        <location>Nucleus</location>
    </subcellularLocation>
    <subcellularLocation>
        <location>Chromosome</location>
    </subcellularLocation>
    <text>Macronuclei.</text>
</comment>
<comment type="PTM">
    <text evidence="2">Cell-growth/division-associated phosphorylation by a CDC2-like kinase.</text>
</comment>
<comment type="sequence caution" evidence="4">
    <conflict type="erroneous gene model prediction">
        <sequence resource="EMBL-CDS" id="EAR83811"/>
    </conflict>
</comment>